<proteinExistence type="inferred from homology"/>
<feature type="chain" id="PRO_0000101281" description="5'-3' exonuclease">
    <location>
        <begin position="1"/>
        <end position="303"/>
    </location>
</feature>
<feature type="domain" description="5'-3' exonuclease" evidence="2">
    <location>
        <begin position="179"/>
        <end position="262"/>
    </location>
</feature>
<comment type="function">
    <text evidence="1">5'-3' exonuclease acting preferentially on double-stranded DNA.</text>
</comment>
<accession>Q9KAV6</accession>
<sequence>MHSPVLLLIDGFNLLSRGYFATSYGKDEAQLPRNEAGYYINALRVFFPKLFQLIREHNVTHVAVAWDVKREDSHRRQAFAFYKASRGELPEALIEQYETATSLLEEIGVAQVTIPPYEADDTIGAFACRWAKEEKGHCFIYSNDRDLLQLLSKSTSQIISSKGKDLIYTEENFRNDYNISPAQWVDVKALLGDKSDNIPGCPGVGEKSALPLIQQYGTIETLYEQIEDLDPKYKRYHKKLVAGEESVIISKELATITTEIEAISSFSLNSLVLTTPADLIIDTLARCGIRVKLAPVQTELKLG</sequence>
<reference key="1">
    <citation type="journal article" date="2000" name="Nucleic Acids Res.">
        <title>Complete genome sequence of the alkaliphilic bacterium Bacillus halodurans and genomic sequence comparison with Bacillus subtilis.</title>
        <authorList>
            <person name="Takami H."/>
            <person name="Nakasone K."/>
            <person name="Takaki Y."/>
            <person name="Maeno G."/>
            <person name="Sasaki R."/>
            <person name="Masui N."/>
            <person name="Fuji F."/>
            <person name="Hirama C."/>
            <person name="Nakamura Y."/>
            <person name="Ogasawara N."/>
            <person name="Kuhara S."/>
            <person name="Horikoshi K."/>
        </authorList>
    </citation>
    <scope>NUCLEOTIDE SEQUENCE [LARGE SCALE GENOMIC DNA]</scope>
    <source>
        <strain>ATCC BAA-125 / DSM 18197 / FERM 7344 / JCM 9153 / C-125</strain>
    </source>
</reference>
<protein>
    <recommendedName>
        <fullName>5'-3' exonuclease</fullName>
        <ecNumber>3.1.11.-</ecNumber>
    </recommendedName>
</protein>
<organism>
    <name type="scientific">Halalkalibacterium halodurans (strain ATCC BAA-125 / DSM 18197 / FERM 7344 / JCM 9153 / C-125)</name>
    <name type="common">Bacillus halodurans</name>
    <dbReference type="NCBI Taxonomy" id="272558"/>
    <lineage>
        <taxon>Bacteria</taxon>
        <taxon>Bacillati</taxon>
        <taxon>Bacillota</taxon>
        <taxon>Bacilli</taxon>
        <taxon>Bacillales</taxon>
        <taxon>Bacillaceae</taxon>
        <taxon>Halalkalibacterium (ex Joshi et al. 2022)</taxon>
    </lineage>
</organism>
<evidence type="ECO:0000250" key="1"/>
<evidence type="ECO:0000255" key="2"/>
<keyword id="KW-0238">DNA-binding</keyword>
<keyword id="KW-0269">Exonuclease</keyword>
<keyword id="KW-0378">Hydrolase</keyword>
<keyword id="KW-0540">Nuclease</keyword>
<keyword id="KW-1185">Reference proteome</keyword>
<name>EX53_HALH5</name>
<dbReference type="EC" id="3.1.11.-"/>
<dbReference type="EMBL" id="BA000004">
    <property type="protein sequence ID" value="BAB05899.1"/>
    <property type="molecule type" value="Genomic_DNA"/>
</dbReference>
<dbReference type="PIR" id="D83922">
    <property type="entry name" value="D83922"/>
</dbReference>
<dbReference type="RefSeq" id="WP_010898337.1">
    <property type="nucleotide sequence ID" value="NC_002570.2"/>
</dbReference>
<dbReference type="SMR" id="Q9KAV6"/>
<dbReference type="STRING" id="272558.gene:10728078"/>
<dbReference type="KEGG" id="bha:BH2180"/>
<dbReference type="eggNOG" id="COG0258">
    <property type="taxonomic scope" value="Bacteria"/>
</dbReference>
<dbReference type="HOGENOM" id="CLU_004675_1_5_9"/>
<dbReference type="OrthoDB" id="9806424at2"/>
<dbReference type="Proteomes" id="UP000001258">
    <property type="component" value="Chromosome"/>
</dbReference>
<dbReference type="GO" id="GO:0008409">
    <property type="term" value="F:5'-3' exonuclease activity"/>
    <property type="evidence" value="ECO:0007669"/>
    <property type="project" value="InterPro"/>
</dbReference>
<dbReference type="GO" id="GO:0017108">
    <property type="term" value="F:5'-flap endonuclease activity"/>
    <property type="evidence" value="ECO:0007669"/>
    <property type="project" value="InterPro"/>
</dbReference>
<dbReference type="GO" id="GO:0003677">
    <property type="term" value="F:DNA binding"/>
    <property type="evidence" value="ECO:0007669"/>
    <property type="project" value="UniProtKB-KW"/>
</dbReference>
<dbReference type="GO" id="GO:0033567">
    <property type="term" value="P:DNA replication, Okazaki fragment processing"/>
    <property type="evidence" value="ECO:0007669"/>
    <property type="project" value="InterPro"/>
</dbReference>
<dbReference type="CDD" id="cd09898">
    <property type="entry name" value="H3TH_53EXO"/>
    <property type="match status" value="1"/>
</dbReference>
<dbReference type="CDD" id="cd09859">
    <property type="entry name" value="PIN_53EXO"/>
    <property type="match status" value="1"/>
</dbReference>
<dbReference type="FunFam" id="1.10.150.20:FF:000003">
    <property type="entry name" value="DNA polymerase I"/>
    <property type="match status" value="1"/>
</dbReference>
<dbReference type="Gene3D" id="1.10.150.20">
    <property type="entry name" value="5' to 3' exonuclease, C-terminal subdomain"/>
    <property type="match status" value="1"/>
</dbReference>
<dbReference type="Gene3D" id="3.40.50.1010">
    <property type="entry name" value="5'-nuclease"/>
    <property type="match status" value="1"/>
</dbReference>
<dbReference type="InterPro" id="IPR020046">
    <property type="entry name" value="5-3_exonucl_a-hlix_arch_N"/>
</dbReference>
<dbReference type="InterPro" id="IPR002421">
    <property type="entry name" value="5-3_exonuclease"/>
</dbReference>
<dbReference type="InterPro" id="IPR036279">
    <property type="entry name" value="5-3_exonuclease_C_sf"/>
</dbReference>
<dbReference type="InterPro" id="IPR020045">
    <property type="entry name" value="DNA_polI_H3TH"/>
</dbReference>
<dbReference type="InterPro" id="IPR038969">
    <property type="entry name" value="FEN"/>
</dbReference>
<dbReference type="InterPro" id="IPR008918">
    <property type="entry name" value="HhH2"/>
</dbReference>
<dbReference type="InterPro" id="IPR029060">
    <property type="entry name" value="PIN-like_dom_sf"/>
</dbReference>
<dbReference type="PANTHER" id="PTHR42646:SF2">
    <property type="entry name" value="5'-3' EXONUCLEASE FAMILY PROTEIN"/>
    <property type="match status" value="1"/>
</dbReference>
<dbReference type="PANTHER" id="PTHR42646">
    <property type="entry name" value="FLAP ENDONUCLEASE XNI"/>
    <property type="match status" value="1"/>
</dbReference>
<dbReference type="Pfam" id="PF01367">
    <property type="entry name" value="5_3_exonuc"/>
    <property type="match status" value="1"/>
</dbReference>
<dbReference type="Pfam" id="PF02739">
    <property type="entry name" value="5_3_exonuc_N"/>
    <property type="match status" value="1"/>
</dbReference>
<dbReference type="SMART" id="SM00475">
    <property type="entry name" value="53EXOc"/>
    <property type="match status" value="1"/>
</dbReference>
<dbReference type="SMART" id="SM00279">
    <property type="entry name" value="HhH2"/>
    <property type="match status" value="1"/>
</dbReference>
<dbReference type="SUPFAM" id="SSF47807">
    <property type="entry name" value="5' to 3' exonuclease, C-terminal subdomain"/>
    <property type="match status" value="1"/>
</dbReference>
<dbReference type="SUPFAM" id="SSF88723">
    <property type="entry name" value="PIN domain-like"/>
    <property type="match status" value="1"/>
</dbReference>
<gene>
    <name type="ordered locus">BH2180</name>
</gene>